<keyword id="KW-0004">4Fe-4S</keyword>
<keyword id="KW-0903">Direct protein sequencing</keyword>
<keyword id="KW-0408">Iron</keyword>
<keyword id="KW-0411">Iron-sulfur</keyword>
<keyword id="KW-0479">Metal-binding</keyword>
<keyword id="KW-0484">Methanogenesis</keyword>
<keyword id="KW-0560">Oxidoreductase</keyword>
<keyword id="KW-0677">Repeat</keyword>
<feature type="initiator methionine" description="Removed" evidence="5 6">
    <location>
        <position position="1"/>
    </location>
</feature>
<feature type="chain" id="PRO_0000150078" description="H(2):CoB-CoM heterodisulfide,ferredoxin reductase subunit C">
    <location>
        <begin position="2"/>
        <end position="185"/>
    </location>
</feature>
<feature type="domain" description="4Fe-4S ferredoxin-type 1" evidence="1">
    <location>
        <begin position="25"/>
        <end position="55"/>
    </location>
</feature>
<feature type="domain" description="4Fe-4S ferredoxin-type 2" evidence="1">
    <location>
        <begin position="68"/>
        <end position="99"/>
    </location>
</feature>
<feature type="binding site" evidence="1">
    <location>
        <position position="35"/>
    </location>
    <ligand>
        <name>[4Fe-4S] cluster</name>
        <dbReference type="ChEBI" id="CHEBI:49883"/>
        <label>1</label>
    </ligand>
</feature>
<feature type="binding site" evidence="1">
    <location>
        <position position="38"/>
    </location>
    <ligand>
        <name>[4Fe-4S] cluster</name>
        <dbReference type="ChEBI" id="CHEBI:49883"/>
        <label>1</label>
    </ligand>
</feature>
<feature type="binding site" evidence="1">
    <location>
        <position position="41"/>
    </location>
    <ligand>
        <name>[4Fe-4S] cluster</name>
        <dbReference type="ChEBI" id="CHEBI:49883"/>
        <label>1</label>
    </ligand>
</feature>
<feature type="binding site" evidence="1">
    <location>
        <position position="45"/>
    </location>
    <ligand>
        <name>[4Fe-4S] cluster</name>
        <dbReference type="ChEBI" id="CHEBI:49883"/>
        <label>2</label>
    </ligand>
</feature>
<feature type="binding site" evidence="1">
    <location>
        <position position="79"/>
    </location>
    <ligand>
        <name>[4Fe-4S] cluster</name>
        <dbReference type="ChEBI" id="CHEBI:49883"/>
        <label>2</label>
    </ligand>
</feature>
<feature type="binding site" evidence="1">
    <location>
        <position position="82"/>
    </location>
    <ligand>
        <name>[4Fe-4S] cluster</name>
        <dbReference type="ChEBI" id="CHEBI:49883"/>
        <label>2</label>
    </ligand>
</feature>
<feature type="binding site" evidence="1">
    <location>
        <position position="85"/>
    </location>
    <ligand>
        <name>[4Fe-4S] cluster</name>
        <dbReference type="ChEBI" id="CHEBI:49883"/>
        <label>2</label>
    </ligand>
</feature>
<feature type="binding site" evidence="1">
    <location>
        <position position="89"/>
    </location>
    <ligand>
        <name>[4Fe-4S] cluster</name>
        <dbReference type="ChEBI" id="CHEBI:49883"/>
        <label>1</label>
    </ligand>
</feature>
<feature type="sequence conflict" description="In Ref. 1; CAA57037." evidence="7" ref="1">
    <original>S</original>
    <variation>Y</variation>
    <location>
        <position position="84"/>
    </location>
</feature>
<feature type="sequence conflict" description="In Ref. 1; CAA57037." evidence="7" ref="1">
    <original>V</original>
    <variation>L</variation>
    <location>
        <position position="119"/>
    </location>
</feature>
<accession>Q50754</accession>
<accession>D9PV03</accession>
<reference key="1">
    <citation type="journal article" date="1994" name="Eur. J. Biochem.">
        <title>The heterodisulfide reductase from Methanobacterium thermoautotrophicum contains sequence motifs characteristic of pyridine-nucleotide-dependent thioredoxin reductases.</title>
        <authorList>
            <person name="Hedderich R."/>
            <person name="Koch J."/>
            <person name="Linder D."/>
            <person name="Thauer R.K."/>
        </authorList>
    </citation>
    <scope>NUCLEOTIDE SEQUENCE [GENOMIC DNA]</scope>
    <scope>PROTEIN SEQUENCE OF 2-25</scope>
    <source>
        <strain>ATCC BAA-927 / DSM 2133 / JCM 14651 / NBRC 100331 / OCM 82 / Marburg</strain>
    </source>
</reference>
<reference key="2">
    <citation type="journal article" date="2010" name="J. Bacteriol.">
        <title>Complete genome sequence of Methanothermobacter marburgensis, a methanoarchaeon model organism.</title>
        <authorList>
            <person name="Liesegang H."/>
            <person name="Kaster A.K."/>
            <person name="Wiezer A."/>
            <person name="Goenrich M."/>
            <person name="Wollherr A."/>
            <person name="Seedorf H."/>
            <person name="Gottschalk G."/>
            <person name="Thauer R.K."/>
        </authorList>
    </citation>
    <scope>NUCLEOTIDE SEQUENCE [LARGE SCALE GENOMIC DNA]</scope>
    <source>
        <strain>ATCC BAA-927 / DSM 2133 / JCM 14651 / NBRC 100331 / OCM 82 / Marburg</strain>
    </source>
</reference>
<reference key="3">
    <citation type="journal article" date="1994" name="Eur. J. Biochem.">
        <title>H2: heterodisulfide oxidoreductase complex from Methanobacterium thermoautotrophicum. Composition and properties.</title>
        <authorList>
            <person name="Setzke E."/>
            <person name="Hedderich R."/>
            <person name="Heiden S."/>
            <person name="Thauer R.K."/>
        </authorList>
    </citation>
    <scope>PROTEIN SEQUENCE OF 2-25</scope>
    <scope>FUNCTION</scope>
    <scope>CATALYTIC ACTIVITY</scope>
    <scope>SUBUNIT</scope>
    <scope>ASSOCIATION WITH F420-NON-REDUCING HYDROGENASE</scope>
    <source>
        <strain>ATCC BAA-927 / DSM 2133 / JCM 14651 / NBRC 100331 / OCM 82 / Marburg</strain>
    </source>
</reference>
<reference key="4">
    <citation type="journal article" date="1990" name="Eur. J. Biochem.">
        <title>Purification and properties of heterodisulfide reductase from Methanobacterium thermoautotrophicum (strain Marburg).</title>
        <authorList>
            <person name="Hedderich R."/>
            <person name="Berkessel A."/>
            <person name="Thauer R.K."/>
        </authorList>
    </citation>
    <scope>FUNCTION</scope>
    <scope>COFACTOR</scope>
    <scope>SUBUNIT</scope>
    <source>
        <strain>ATCC BAA-927 / DSM 2133 / JCM 14651 / NBRC 100331 / OCM 82 / Marburg</strain>
    </source>
</reference>
<reference key="5">
    <citation type="journal article" date="2003" name="Arch. Microbiol.">
        <title>Physiological role of the F420-non-reducing hydrogenase (Mvh) from Methanothermobacter marburgensis.</title>
        <authorList>
            <person name="Stojanowic A."/>
            <person name="Mander G.J."/>
            <person name="Duin E.C."/>
            <person name="Hedderich R."/>
        </authorList>
    </citation>
    <scope>ASSOCIATION WITH F420-NON-REDUCING HYDROGENASE</scope>
    <source>
        <strain>ATCC BAA-927 / DSM 2133 / JCM 14651 / NBRC 100331 / OCM 82 / Marburg</strain>
    </source>
</reference>
<reference key="6">
    <citation type="journal article" date="2011" name="Proc. Natl. Acad. Sci. U.S.A.">
        <title>Coupling of ferredoxin and heterodisulfide reduction via electron bifurcation in hydrogenotrophic methanogenic archaea.</title>
        <authorList>
            <person name="Kaster A.K."/>
            <person name="Moll J."/>
            <person name="Parey K."/>
            <person name="Thauer R.K."/>
        </authorList>
    </citation>
    <scope>FUNCTION</scope>
    <scope>CATALYTIC ACTIVITY</scope>
    <scope>SUBUNIT</scope>
    <source>
        <strain>ATCC BAA-927 / DSM 2133 / JCM 14651 / NBRC 100331 / OCM 82 / Marburg</strain>
    </source>
</reference>
<proteinExistence type="evidence at protein level"/>
<dbReference type="EC" id="1.8.98.5" evidence="4 9"/>
<dbReference type="EMBL" id="X81133">
    <property type="protein sequence ID" value="CAA57037.1"/>
    <property type="molecule type" value="Genomic_DNA"/>
</dbReference>
<dbReference type="EMBL" id="CP001710">
    <property type="protein sequence ID" value="ADL58050.1"/>
    <property type="molecule type" value="Genomic_DNA"/>
</dbReference>
<dbReference type="PIR" id="S78508">
    <property type="entry name" value="S78508"/>
</dbReference>
<dbReference type="SMR" id="Q50754"/>
<dbReference type="DIP" id="DIP-59608N"/>
<dbReference type="IntAct" id="Q50754">
    <property type="interactions" value="1"/>
</dbReference>
<dbReference type="STRING" id="79929.MTBMA_c04490"/>
<dbReference type="PaxDb" id="79929-MTBMA_c04490"/>
<dbReference type="KEGG" id="mmg:MTBMA_c04490"/>
<dbReference type="PATRIC" id="fig|79929.8.peg.439"/>
<dbReference type="HOGENOM" id="CLU_121273_0_0_2"/>
<dbReference type="OrthoDB" id="144910at2157"/>
<dbReference type="BRENDA" id="1.8.98.5">
    <property type="organism ID" value="7427"/>
</dbReference>
<dbReference type="UniPathway" id="UPA00647">
    <property type="reaction ID" value="UER00700"/>
</dbReference>
<dbReference type="Proteomes" id="UP000000345">
    <property type="component" value="Chromosome"/>
</dbReference>
<dbReference type="GO" id="GO:0005886">
    <property type="term" value="C:plasma membrane"/>
    <property type="evidence" value="ECO:0007669"/>
    <property type="project" value="TreeGrafter"/>
</dbReference>
<dbReference type="GO" id="GO:0051539">
    <property type="term" value="F:4 iron, 4 sulfur cluster binding"/>
    <property type="evidence" value="ECO:0007669"/>
    <property type="project" value="UniProtKB-KW"/>
</dbReference>
<dbReference type="GO" id="GO:0051912">
    <property type="term" value="F:CoB--CoM heterodisulfide reductase activity"/>
    <property type="evidence" value="ECO:0000314"/>
    <property type="project" value="UniProtKB"/>
</dbReference>
<dbReference type="GO" id="GO:0046872">
    <property type="term" value="F:metal ion binding"/>
    <property type="evidence" value="ECO:0007669"/>
    <property type="project" value="UniProtKB-KW"/>
</dbReference>
<dbReference type="GO" id="GO:0015948">
    <property type="term" value="P:methanogenesis"/>
    <property type="evidence" value="ECO:0000314"/>
    <property type="project" value="UniProtKB"/>
</dbReference>
<dbReference type="FunFam" id="1.10.1060.10:FF:000026">
    <property type="entry name" value="H(2):CoB-CoM heterodisulfide,ferredoxin reductase subunit C"/>
    <property type="match status" value="1"/>
</dbReference>
<dbReference type="Gene3D" id="1.10.1060.10">
    <property type="entry name" value="Alpha-helical ferredoxin"/>
    <property type="match status" value="1"/>
</dbReference>
<dbReference type="InterPro" id="IPR017896">
    <property type="entry name" value="4Fe4S_Fe-S-bd"/>
</dbReference>
<dbReference type="InterPro" id="IPR017900">
    <property type="entry name" value="4Fe4S_Fe_S_CS"/>
</dbReference>
<dbReference type="InterPro" id="IPR017680">
    <property type="entry name" value="CoB/CoM_hetero-S_Rdtase_csu"/>
</dbReference>
<dbReference type="InterPro" id="IPR051460">
    <property type="entry name" value="HdrC_iron-sulfur_subunit"/>
</dbReference>
<dbReference type="InterPro" id="IPR009051">
    <property type="entry name" value="Helical_ferredxn"/>
</dbReference>
<dbReference type="NCBIfam" id="TIGR03290">
    <property type="entry name" value="CoB_CoM_SS_C"/>
    <property type="match status" value="1"/>
</dbReference>
<dbReference type="PANTHER" id="PTHR43255:SF1">
    <property type="entry name" value="IRON-SULFUR-BINDING OXIDOREDUCTASE FADF-RELATED"/>
    <property type="match status" value="1"/>
</dbReference>
<dbReference type="PANTHER" id="PTHR43255">
    <property type="entry name" value="IRON-SULFUR-BINDING OXIDOREDUCTASE FADF-RELATED-RELATED"/>
    <property type="match status" value="1"/>
</dbReference>
<dbReference type="Pfam" id="PF13183">
    <property type="entry name" value="Fer4_8"/>
    <property type="match status" value="1"/>
</dbReference>
<dbReference type="SUPFAM" id="SSF46548">
    <property type="entry name" value="alpha-helical ferredoxin"/>
    <property type="match status" value="1"/>
</dbReference>
<dbReference type="PROSITE" id="PS00198">
    <property type="entry name" value="4FE4S_FER_1"/>
    <property type="match status" value="2"/>
</dbReference>
<dbReference type="PROSITE" id="PS51379">
    <property type="entry name" value="4FE4S_FER_2"/>
    <property type="match status" value="2"/>
</dbReference>
<comment type="function">
    <text evidence="3 4 6">Part of a complex that catalyzes the reversible reduction of CoM-S-S-CoB to the thiol-coenzymes H-S-CoM (coenzyme M) and H-S-CoB (coenzyme B).</text>
</comment>
<comment type="catalytic activity">
    <reaction evidence="4 9">
        <text>coenzyme B + coenzyme M + 2 reduced [2Fe-2S]-[ferredoxin] + 2 H(+) = coenzyme M-coenzyme B heterodisulfide + 2 H2 + 2 oxidized [2Fe-2S]-[ferredoxin]</text>
        <dbReference type="Rhea" id="RHEA:55748"/>
        <dbReference type="Rhea" id="RHEA-COMP:10000"/>
        <dbReference type="Rhea" id="RHEA-COMP:10001"/>
        <dbReference type="ChEBI" id="CHEBI:15378"/>
        <dbReference type="ChEBI" id="CHEBI:18276"/>
        <dbReference type="ChEBI" id="CHEBI:33737"/>
        <dbReference type="ChEBI" id="CHEBI:33738"/>
        <dbReference type="ChEBI" id="CHEBI:58319"/>
        <dbReference type="ChEBI" id="CHEBI:58411"/>
        <dbReference type="ChEBI" id="CHEBI:58596"/>
        <dbReference type="EC" id="1.8.98.5"/>
    </reaction>
</comment>
<comment type="cofactor">
    <cofactor evidence="1 8">
        <name>[4Fe-4S] cluster</name>
        <dbReference type="ChEBI" id="CHEBI:49883"/>
    </cofactor>
    <text evidence="1 8">Binds 2 [4Fe-4S] clusters per subunit.</text>
</comment>
<comment type="pathway">
    <text evidence="7">Cofactor metabolism; coenzyme M-coenzyme B heterodisulfide reduction; coenzyme B and coenzyme M from coenzyme M-coenzyme B heterodisulfide: step 1/1.</text>
</comment>
<comment type="subunit">
    <text evidence="2 3 4 6">The heterodisulfide reductase is composed of three subunits; HdrA, HdrB and HdrC. It forms a complex with the F420-non-reducing hydrogenase (Mvh), which provides the reducing equivalents to the heterodisulfide reductase.</text>
</comment>
<comment type="similarity">
    <text evidence="7">Belongs to the HdrC family.</text>
</comment>
<gene>
    <name type="primary">hdrC</name>
    <name type="ordered locus">MTBMA_c04490</name>
</gene>
<protein>
    <recommendedName>
        <fullName evidence="7">H(2):CoB-CoM heterodisulfide,ferredoxin reductase subunit C</fullName>
        <ecNumber evidence="4 9">1.8.98.5</ecNumber>
    </recommendedName>
    <alternativeName>
        <fullName evidence="7">CoB--CoM heterodisulfide reductase iron-sulfur subunit C</fullName>
    </alternativeName>
</protein>
<name>HDRC_METTM</name>
<sequence length="185" mass="20520">MTLLQREENIIRKGNIDKEFSEKIKAAGGDSLEYCFQCGTCTGSCPSGRRTPYRVRQIIRKANVGLKDEIISDPTLWMCTTCYSCQERCPRKVKIVDVVKLARNEAAKAGFMAPAHKAVGSFVIKTGHGVPINDATMELRKAVGLGELPPTTHQFPEALEEVQKIIKATGFDQLIGYNWETGELE</sequence>
<evidence type="ECO:0000255" key="1">
    <source>
        <dbReference type="PROSITE-ProRule" id="PRU00711"/>
    </source>
</evidence>
<evidence type="ECO:0000269" key="2">
    <source>
    </source>
</evidence>
<evidence type="ECO:0000269" key="3">
    <source>
    </source>
</evidence>
<evidence type="ECO:0000269" key="4">
    <source>
    </source>
</evidence>
<evidence type="ECO:0000269" key="5">
    <source>
    </source>
</evidence>
<evidence type="ECO:0000269" key="6">
    <source>
    </source>
</evidence>
<evidence type="ECO:0000305" key="7"/>
<evidence type="ECO:0000305" key="8">
    <source>
    </source>
</evidence>
<evidence type="ECO:0000305" key="9">
    <source>
    </source>
</evidence>
<organism>
    <name type="scientific">Methanothermobacter marburgensis (strain ATCC BAA-927 / DSM 2133 / JCM 14651 / NBRC 100331 / OCM 82 / Marburg)</name>
    <name type="common">Methanobacterium thermoautotrophicum</name>
    <dbReference type="NCBI Taxonomy" id="79929"/>
    <lineage>
        <taxon>Archaea</taxon>
        <taxon>Methanobacteriati</taxon>
        <taxon>Methanobacteriota</taxon>
        <taxon>Methanomada group</taxon>
        <taxon>Methanobacteria</taxon>
        <taxon>Methanobacteriales</taxon>
        <taxon>Methanobacteriaceae</taxon>
        <taxon>Methanothermobacter</taxon>
    </lineage>
</organism>